<accession>B5YYW7</accession>
<organism>
    <name type="scientific">Escherichia coli O157:H7 (strain EC4115 / EHEC)</name>
    <dbReference type="NCBI Taxonomy" id="444450"/>
    <lineage>
        <taxon>Bacteria</taxon>
        <taxon>Pseudomonadati</taxon>
        <taxon>Pseudomonadota</taxon>
        <taxon>Gammaproteobacteria</taxon>
        <taxon>Enterobacterales</taxon>
        <taxon>Enterobacteriaceae</taxon>
        <taxon>Escherichia</taxon>
    </lineage>
</organism>
<protein>
    <recommendedName>
        <fullName evidence="1">D-serine dehydratase</fullName>
        <ecNumber evidence="1">4.3.1.18</ecNumber>
    </recommendedName>
    <alternativeName>
        <fullName evidence="1">D-serine deaminase</fullName>
        <shortName evidence="1">DSD</shortName>
    </alternativeName>
</protein>
<proteinExistence type="inferred from homology"/>
<reference key="1">
    <citation type="journal article" date="2011" name="Proc. Natl. Acad. Sci. U.S.A.">
        <title>Genomic anatomy of Escherichia coli O157:H7 outbreaks.</title>
        <authorList>
            <person name="Eppinger M."/>
            <person name="Mammel M.K."/>
            <person name="Leclerc J.E."/>
            <person name="Ravel J."/>
            <person name="Cebula T.A."/>
        </authorList>
    </citation>
    <scope>NUCLEOTIDE SEQUENCE [LARGE SCALE GENOMIC DNA]</scope>
    <source>
        <strain>EC4115 / EHEC</strain>
    </source>
</reference>
<feature type="chain" id="PRO_1000135760" description="D-serine dehydratase">
    <location>
        <begin position="1"/>
        <end position="442"/>
    </location>
</feature>
<feature type="modified residue" description="N6-(pyridoxal phosphate)lysine" evidence="1">
    <location>
        <position position="118"/>
    </location>
</feature>
<evidence type="ECO:0000255" key="1">
    <source>
        <dbReference type="HAMAP-Rule" id="MF_01030"/>
    </source>
</evidence>
<keyword id="KW-0456">Lyase</keyword>
<keyword id="KW-0663">Pyridoxal phosphate</keyword>
<comment type="catalytic activity">
    <reaction evidence="1">
        <text>D-serine = pyruvate + NH4(+)</text>
        <dbReference type="Rhea" id="RHEA:13977"/>
        <dbReference type="ChEBI" id="CHEBI:15361"/>
        <dbReference type="ChEBI" id="CHEBI:28938"/>
        <dbReference type="ChEBI" id="CHEBI:35247"/>
        <dbReference type="EC" id="4.3.1.18"/>
    </reaction>
</comment>
<comment type="cofactor">
    <cofactor evidence="1">
        <name>pyridoxal 5'-phosphate</name>
        <dbReference type="ChEBI" id="CHEBI:597326"/>
    </cofactor>
</comment>
<comment type="subunit">
    <text evidence="1">Monomer.</text>
</comment>
<comment type="similarity">
    <text evidence="1">Belongs to the serine/threonine dehydratase family. DsdA subfamily.</text>
</comment>
<name>SDHD_ECO5E</name>
<dbReference type="EC" id="4.3.1.18" evidence="1"/>
<dbReference type="EMBL" id="CP001164">
    <property type="protein sequence ID" value="ACI35232.1"/>
    <property type="molecule type" value="Genomic_DNA"/>
</dbReference>
<dbReference type="RefSeq" id="WP_000426437.1">
    <property type="nucleotide sequence ID" value="NC_011353.1"/>
</dbReference>
<dbReference type="SMR" id="B5YYW7"/>
<dbReference type="KEGG" id="ecf:ECH74115_3597"/>
<dbReference type="HOGENOM" id="CLU_035707_0_0_6"/>
<dbReference type="GO" id="GO:0008721">
    <property type="term" value="F:D-serine ammonia-lyase activity"/>
    <property type="evidence" value="ECO:0007669"/>
    <property type="project" value="UniProtKB-EC"/>
</dbReference>
<dbReference type="GO" id="GO:0016836">
    <property type="term" value="F:hydro-lyase activity"/>
    <property type="evidence" value="ECO:0007669"/>
    <property type="project" value="UniProtKB-UniRule"/>
</dbReference>
<dbReference type="GO" id="GO:0030170">
    <property type="term" value="F:pyridoxal phosphate binding"/>
    <property type="evidence" value="ECO:0007669"/>
    <property type="project" value="InterPro"/>
</dbReference>
<dbReference type="GO" id="GO:0036088">
    <property type="term" value="P:D-serine catabolic process"/>
    <property type="evidence" value="ECO:0007669"/>
    <property type="project" value="TreeGrafter"/>
</dbReference>
<dbReference type="GO" id="GO:0009097">
    <property type="term" value="P:isoleucine biosynthetic process"/>
    <property type="evidence" value="ECO:0007669"/>
    <property type="project" value="TreeGrafter"/>
</dbReference>
<dbReference type="CDD" id="cd06447">
    <property type="entry name" value="D-Ser-dehyd"/>
    <property type="match status" value="1"/>
</dbReference>
<dbReference type="FunFam" id="3.40.50.1100:FF:000018">
    <property type="entry name" value="D-serine dehydratase"/>
    <property type="match status" value="1"/>
</dbReference>
<dbReference type="Gene3D" id="3.40.50.1100">
    <property type="match status" value="2"/>
</dbReference>
<dbReference type="HAMAP" id="MF_01030">
    <property type="entry name" value="D_Ser_dehydrat"/>
    <property type="match status" value="1"/>
</dbReference>
<dbReference type="InterPro" id="IPR011780">
    <property type="entry name" value="D_Ser_am_lyase"/>
</dbReference>
<dbReference type="InterPro" id="IPR050147">
    <property type="entry name" value="Ser/Thr_Dehydratase"/>
</dbReference>
<dbReference type="InterPro" id="IPR000634">
    <property type="entry name" value="Ser/Thr_deHydtase_PyrdxlP-BS"/>
</dbReference>
<dbReference type="InterPro" id="IPR001926">
    <property type="entry name" value="TrpB-like_PALP"/>
</dbReference>
<dbReference type="InterPro" id="IPR036052">
    <property type="entry name" value="TrpB-like_PALP_sf"/>
</dbReference>
<dbReference type="NCBIfam" id="TIGR02035">
    <property type="entry name" value="D_Ser_am_lyase"/>
    <property type="match status" value="1"/>
</dbReference>
<dbReference type="NCBIfam" id="NF002823">
    <property type="entry name" value="PRK02991.1"/>
    <property type="match status" value="1"/>
</dbReference>
<dbReference type="PANTHER" id="PTHR48078:SF9">
    <property type="entry name" value="D-SERINE DEHYDRATASE"/>
    <property type="match status" value="1"/>
</dbReference>
<dbReference type="PANTHER" id="PTHR48078">
    <property type="entry name" value="THREONINE DEHYDRATASE, MITOCHONDRIAL-RELATED"/>
    <property type="match status" value="1"/>
</dbReference>
<dbReference type="Pfam" id="PF00291">
    <property type="entry name" value="PALP"/>
    <property type="match status" value="1"/>
</dbReference>
<dbReference type="SUPFAM" id="SSF53686">
    <property type="entry name" value="Tryptophan synthase beta subunit-like PLP-dependent enzymes"/>
    <property type="match status" value="1"/>
</dbReference>
<dbReference type="PROSITE" id="PS00165">
    <property type="entry name" value="DEHYDRATASE_SER_THR"/>
    <property type="match status" value="1"/>
</dbReference>
<gene>
    <name evidence="1" type="primary">dsdA</name>
    <name type="ordered locus">ECH74115_3597</name>
</gene>
<sequence>MENAKMNSLIAQYPLVKDLVALKETTWFNPGTTSLAEGLPYVGLTEQDVQDAHARLSRFAPYLAKAFPETAATGGIIESELVAIPAMQKRLEKEYQQPISGQLLLKKDSHLPISGSIKARGGIYEVLAHAEKLALEAGLLTLEDDYSKLLSPEFKQFFSQYSIAVGSTGNLGLSIGIMSARIGFKVTVHMSADARAWKKAKLRSHGVTVVEYEQDYGVAVEEGRKAAQSDPNCFFIDDENSRTLFLGYSVAGQRLKAQFAEQGRIVDADNPLFVYLPCGVGGGPGGVAFGLKLAFGDHVHCFFAEPTHSPCMLLGVHTGLHDQISVQDIGIDNLTAADGLAVGRASGFVGRAMERLLDGFYTLSDQTMYDMLGWLAQEEGIRLEPSALAGMAGPQRVCASVSYQQMHGFSAEQLRNATHLVWATGGGMVPEEEMEQYLAKGR</sequence>